<comment type="function">
    <text evidence="1">Catalyzes the ATP-dependent transfer of a sulfur to tRNA to produce 4-thiouridine in position 8 of tRNAs, which functions as a near-UV photosensor. Also catalyzes the transfer of sulfur to the sulfur carrier protein ThiS, forming ThiS-thiocarboxylate. This is a step in the synthesis of thiazole, in the thiamine biosynthesis pathway. The sulfur is donated as persulfide by IscS.</text>
</comment>
<comment type="catalytic activity">
    <reaction evidence="1">
        <text>[ThiI sulfur-carrier protein]-S-sulfanyl-L-cysteine + a uridine in tRNA + 2 reduced [2Fe-2S]-[ferredoxin] + ATP + H(+) = [ThiI sulfur-carrier protein]-L-cysteine + a 4-thiouridine in tRNA + 2 oxidized [2Fe-2S]-[ferredoxin] + AMP + diphosphate</text>
        <dbReference type="Rhea" id="RHEA:24176"/>
        <dbReference type="Rhea" id="RHEA-COMP:10000"/>
        <dbReference type="Rhea" id="RHEA-COMP:10001"/>
        <dbReference type="Rhea" id="RHEA-COMP:13337"/>
        <dbReference type="Rhea" id="RHEA-COMP:13338"/>
        <dbReference type="Rhea" id="RHEA-COMP:13339"/>
        <dbReference type="Rhea" id="RHEA-COMP:13340"/>
        <dbReference type="ChEBI" id="CHEBI:15378"/>
        <dbReference type="ChEBI" id="CHEBI:29950"/>
        <dbReference type="ChEBI" id="CHEBI:30616"/>
        <dbReference type="ChEBI" id="CHEBI:33019"/>
        <dbReference type="ChEBI" id="CHEBI:33737"/>
        <dbReference type="ChEBI" id="CHEBI:33738"/>
        <dbReference type="ChEBI" id="CHEBI:61963"/>
        <dbReference type="ChEBI" id="CHEBI:65315"/>
        <dbReference type="ChEBI" id="CHEBI:136798"/>
        <dbReference type="ChEBI" id="CHEBI:456215"/>
        <dbReference type="EC" id="2.8.1.4"/>
    </reaction>
</comment>
<comment type="catalytic activity">
    <reaction evidence="1">
        <text>[ThiS sulfur-carrier protein]-C-terminal Gly-Gly-AMP + S-sulfanyl-L-cysteinyl-[cysteine desulfurase] + AH2 = [ThiS sulfur-carrier protein]-C-terminal-Gly-aminoethanethioate + L-cysteinyl-[cysteine desulfurase] + A + AMP + 2 H(+)</text>
        <dbReference type="Rhea" id="RHEA:43340"/>
        <dbReference type="Rhea" id="RHEA-COMP:12157"/>
        <dbReference type="Rhea" id="RHEA-COMP:12158"/>
        <dbReference type="Rhea" id="RHEA-COMP:12910"/>
        <dbReference type="Rhea" id="RHEA-COMP:19908"/>
        <dbReference type="ChEBI" id="CHEBI:13193"/>
        <dbReference type="ChEBI" id="CHEBI:15378"/>
        <dbReference type="ChEBI" id="CHEBI:17499"/>
        <dbReference type="ChEBI" id="CHEBI:29950"/>
        <dbReference type="ChEBI" id="CHEBI:61963"/>
        <dbReference type="ChEBI" id="CHEBI:90618"/>
        <dbReference type="ChEBI" id="CHEBI:232372"/>
        <dbReference type="ChEBI" id="CHEBI:456215"/>
    </reaction>
</comment>
<comment type="pathway">
    <text evidence="1">Cofactor biosynthesis; thiamine diphosphate biosynthesis.</text>
</comment>
<comment type="subcellular location">
    <subcellularLocation>
        <location evidence="1">Cytoplasm</location>
    </subcellularLocation>
</comment>
<comment type="similarity">
    <text evidence="1">Belongs to the ThiI family.</text>
</comment>
<evidence type="ECO:0000255" key="1">
    <source>
        <dbReference type="HAMAP-Rule" id="MF_00021"/>
    </source>
</evidence>
<protein>
    <recommendedName>
        <fullName evidence="1">tRNA sulfurtransferase</fullName>
        <ecNumber evidence="1">2.8.1.4</ecNumber>
    </recommendedName>
    <alternativeName>
        <fullName evidence="1">Sulfur carrier protein ThiS sulfurtransferase</fullName>
    </alternativeName>
    <alternativeName>
        <fullName evidence="1">Thiamine biosynthesis protein ThiI</fullName>
    </alternativeName>
    <alternativeName>
        <fullName evidence="1">tRNA 4-thiouridine synthase</fullName>
    </alternativeName>
</protein>
<sequence length="482" mass="54960">MKFIIKLFPEITIKSQSVRLRFIKILTGNIRNVLKHYDETLAVVRHWDNIEVRAKDESQRLAIRDALTRIPGIHHILEVEDVPFTDMHDIFEKALVQYRDQLEGKTFCVRVKRRGKHDFSSIDVERYVGGGLNQHIESARVKLTNPDVTVHLEVEDDRLLLIKGRYEGIGGFPIGTQEDVLSLISGGFDSGVSSYMLMRRGCRVHYCFFNLGGAAHEIGVRQVAHYLWNRFGSSHRVRFVAINFEPVVGEILEKIDDGQMGVILKRMMVRAASKVAERYGVQALVTGEALGQVSSQTLTNLRLIDNVSDTLILRPLISYDKEHIINLARQIGTEDFARTMPEYCGVISKSPTVKAVKSKIEAEEEKFDFSILDKVVEEANNVDIREIAQQTEQEVVEVETVNGFGPNDVILDIRSVDEQEDKPLRVEGIDVVSLPFYKLSTKFGDLDQNKTWLLWCERGVMSRLQALYLREQGFNNVKVYRP</sequence>
<dbReference type="EC" id="2.8.1.4" evidence="1"/>
<dbReference type="EMBL" id="CU928158">
    <property type="protein sequence ID" value="CAQ90097.1"/>
    <property type="molecule type" value="Genomic_DNA"/>
</dbReference>
<dbReference type="RefSeq" id="WP_000668711.1">
    <property type="nucleotide sequence ID" value="NC_011740.1"/>
</dbReference>
<dbReference type="SMR" id="B7LMG4"/>
<dbReference type="GeneID" id="75056367"/>
<dbReference type="KEGG" id="efe:EFER_2602"/>
<dbReference type="HOGENOM" id="CLU_037952_4_1_6"/>
<dbReference type="OrthoDB" id="9773948at2"/>
<dbReference type="UniPathway" id="UPA00060"/>
<dbReference type="Proteomes" id="UP000000745">
    <property type="component" value="Chromosome"/>
</dbReference>
<dbReference type="GO" id="GO:0005829">
    <property type="term" value="C:cytosol"/>
    <property type="evidence" value="ECO:0007669"/>
    <property type="project" value="TreeGrafter"/>
</dbReference>
<dbReference type="GO" id="GO:0005524">
    <property type="term" value="F:ATP binding"/>
    <property type="evidence" value="ECO:0007669"/>
    <property type="project" value="UniProtKB-UniRule"/>
</dbReference>
<dbReference type="GO" id="GO:0004810">
    <property type="term" value="F:CCA tRNA nucleotidyltransferase activity"/>
    <property type="evidence" value="ECO:0007669"/>
    <property type="project" value="InterPro"/>
</dbReference>
<dbReference type="GO" id="GO:0000049">
    <property type="term" value="F:tRNA binding"/>
    <property type="evidence" value="ECO:0007669"/>
    <property type="project" value="UniProtKB-UniRule"/>
</dbReference>
<dbReference type="GO" id="GO:0140741">
    <property type="term" value="F:tRNA-uracil-4 sulfurtransferase activity"/>
    <property type="evidence" value="ECO:0007669"/>
    <property type="project" value="UniProtKB-EC"/>
</dbReference>
<dbReference type="GO" id="GO:0009228">
    <property type="term" value="P:thiamine biosynthetic process"/>
    <property type="evidence" value="ECO:0007669"/>
    <property type="project" value="UniProtKB-KW"/>
</dbReference>
<dbReference type="GO" id="GO:0009229">
    <property type="term" value="P:thiamine diphosphate biosynthetic process"/>
    <property type="evidence" value="ECO:0007669"/>
    <property type="project" value="UniProtKB-UniRule"/>
</dbReference>
<dbReference type="GO" id="GO:0052837">
    <property type="term" value="P:thiazole biosynthetic process"/>
    <property type="evidence" value="ECO:0007669"/>
    <property type="project" value="InterPro"/>
</dbReference>
<dbReference type="GO" id="GO:0002937">
    <property type="term" value="P:tRNA 4-thiouridine biosynthesis"/>
    <property type="evidence" value="ECO:0007669"/>
    <property type="project" value="TreeGrafter"/>
</dbReference>
<dbReference type="CDD" id="cd01712">
    <property type="entry name" value="PPase_ThiI"/>
    <property type="match status" value="1"/>
</dbReference>
<dbReference type="CDD" id="cd00158">
    <property type="entry name" value="RHOD"/>
    <property type="match status" value="1"/>
</dbReference>
<dbReference type="CDD" id="cd11716">
    <property type="entry name" value="THUMP_ThiI"/>
    <property type="match status" value="1"/>
</dbReference>
<dbReference type="FunFam" id="3.30.2130.30:FF:000002">
    <property type="entry name" value="tRNA sulfurtransferase"/>
    <property type="match status" value="1"/>
</dbReference>
<dbReference type="FunFam" id="3.40.250.10:FF:000003">
    <property type="entry name" value="tRNA sulfurtransferase"/>
    <property type="match status" value="1"/>
</dbReference>
<dbReference type="FunFam" id="3.40.50.620:FF:000029">
    <property type="entry name" value="tRNA sulfurtransferase"/>
    <property type="match status" value="1"/>
</dbReference>
<dbReference type="Gene3D" id="3.30.2130.30">
    <property type="match status" value="1"/>
</dbReference>
<dbReference type="Gene3D" id="3.40.50.620">
    <property type="entry name" value="HUPs"/>
    <property type="match status" value="1"/>
</dbReference>
<dbReference type="Gene3D" id="3.40.250.10">
    <property type="entry name" value="Rhodanese-like domain"/>
    <property type="match status" value="1"/>
</dbReference>
<dbReference type="HAMAP" id="MF_00021">
    <property type="entry name" value="ThiI"/>
    <property type="match status" value="1"/>
</dbReference>
<dbReference type="InterPro" id="IPR001763">
    <property type="entry name" value="Rhodanese-like_dom"/>
</dbReference>
<dbReference type="InterPro" id="IPR036873">
    <property type="entry name" value="Rhodanese-like_dom_sf"/>
</dbReference>
<dbReference type="InterPro" id="IPR014729">
    <property type="entry name" value="Rossmann-like_a/b/a_fold"/>
</dbReference>
<dbReference type="InterPro" id="IPR020536">
    <property type="entry name" value="ThiI_AANH"/>
</dbReference>
<dbReference type="InterPro" id="IPR054173">
    <property type="entry name" value="ThiI_fer"/>
</dbReference>
<dbReference type="InterPro" id="IPR049961">
    <property type="entry name" value="ThiI_N"/>
</dbReference>
<dbReference type="InterPro" id="IPR026340">
    <property type="entry name" value="THII_Thiazole_biosynth_dom"/>
</dbReference>
<dbReference type="InterPro" id="IPR004114">
    <property type="entry name" value="THUMP_dom"/>
</dbReference>
<dbReference type="InterPro" id="IPR049962">
    <property type="entry name" value="THUMP_ThiI"/>
</dbReference>
<dbReference type="InterPro" id="IPR003720">
    <property type="entry name" value="tRNA_STrfase"/>
</dbReference>
<dbReference type="InterPro" id="IPR050102">
    <property type="entry name" value="tRNA_sulfurtransferase_ThiI"/>
</dbReference>
<dbReference type="NCBIfam" id="TIGR04271">
    <property type="entry name" value="ThiI_C_thiazole"/>
    <property type="match status" value="1"/>
</dbReference>
<dbReference type="NCBIfam" id="TIGR00342">
    <property type="entry name" value="tRNA uracil 4-sulfurtransferase ThiI"/>
    <property type="match status" value="1"/>
</dbReference>
<dbReference type="PANTHER" id="PTHR43209">
    <property type="entry name" value="TRNA SULFURTRANSFERASE"/>
    <property type="match status" value="1"/>
</dbReference>
<dbReference type="PANTHER" id="PTHR43209:SF1">
    <property type="entry name" value="TRNA SULFURTRANSFERASE"/>
    <property type="match status" value="1"/>
</dbReference>
<dbReference type="Pfam" id="PF02568">
    <property type="entry name" value="ThiI"/>
    <property type="match status" value="1"/>
</dbReference>
<dbReference type="Pfam" id="PF22025">
    <property type="entry name" value="ThiI_fer"/>
    <property type="match status" value="1"/>
</dbReference>
<dbReference type="Pfam" id="PF02926">
    <property type="entry name" value="THUMP"/>
    <property type="match status" value="1"/>
</dbReference>
<dbReference type="SMART" id="SM00981">
    <property type="entry name" value="THUMP"/>
    <property type="match status" value="1"/>
</dbReference>
<dbReference type="SUPFAM" id="SSF52402">
    <property type="entry name" value="Adenine nucleotide alpha hydrolases-like"/>
    <property type="match status" value="1"/>
</dbReference>
<dbReference type="SUPFAM" id="SSF52821">
    <property type="entry name" value="Rhodanese/Cell cycle control phosphatase"/>
    <property type="match status" value="1"/>
</dbReference>
<dbReference type="SUPFAM" id="SSF143437">
    <property type="entry name" value="THUMP domain-like"/>
    <property type="match status" value="1"/>
</dbReference>
<dbReference type="PROSITE" id="PS50206">
    <property type="entry name" value="RHODANESE_3"/>
    <property type="match status" value="1"/>
</dbReference>
<dbReference type="PROSITE" id="PS51165">
    <property type="entry name" value="THUMP"/>
    <property type="match status" value="1"/>
</dbReference>
<organism>
    <name type="scientific">Escherichia fergusonii (strain ATCC 35469 / DSM 13698 / CCUG 18766 / IAM 14443 / JCM 21226 / LMG 7866 / NBRC 102419 / NCTC 12128 / CDC 0568-73)</name>
    <dbReference type="NCBI Taxonomy" id="585054"/>
    <lineage>
        <taxon>Bacteria</taxon>
        <taxon>Pseudomonadati</taxon>
        <taxon>Pseudomonadota</taxon>
        <taxon>Gammaproteobacteria</taxon>
        <taxon>Enterobacterales</taxon>
        <taxon>Enterobacteriaceae</taxon>
        <taxon>Escherichia</taxon>
    </lineage>
</organism>
<proteinExistence type="inferred from homology"/>
<gene>
    <name evidence="1" type="primary">thiI</name>
    <name type="ordered locus">EFER_2602</name>
</gene>
<reference key="1">
    <citation type="journal article" date="2009" name="PLoS Genet.">
        <title>Organised genome dynamics in the Escherichia coli species results in highly diverse adaptive paths.</title>
        <authorList>
            <person name="Touchon M."/>
            <person name="Hoede C."/>
            <person name="Tenaillon O."/>
            <person name="Barbe V."/>
            <person name="Baeriswyl S."/>
            <person name="Bidet P."/>
            <person name="Bingen E."/>
            <person name="Bonacorsi S."/>
            <person name="Bouchier C."/>
            <person name="Bouvet O."/>
            <person name="Calteau A."/>
            <person name="Chiapello H."/>
            <person name="Clermont O."/>
            <person name="Cruveiller S."/>
            <person name="Danchin A."/>
            <person name="Diard M."/>
            <person name="Dossat C."/>
            <person name="Karoui M.E."/>
            <person name="Frapy E."/>
            <person name="Garry L."/>
            <person name="Ghigo J.M."/>
            <person name="Gilles A.M."/>
            <person name="Johnson J."/>
            <person name="Le Bouguenec C."/>
            <person name="Lescat M."/>
            <person name="Mangenot S."/>
            <person name="Martinez-Jehanne V."/>
            <person name="Matic I."/>
            <person name="Nassif X."/>
            <person name="Oztas S."/>
            <person name="Petit M.A."/>
            <person name="Pichon C."/>
            <person name="Rouy Z."/>
            <person name="Ruf C.S."/>
            <person name="Schneider D."/>
            <person name="Tourret J."/>
            <person name="Vacherie B."/>
            <person name="Vallenet D."/>
            <person name="Medigue C."/>
            <person name="Rocha E.P.C."/>
            <person name="Denamur E."/>
        </authorList>
    </citation>
    <scope>NUCLEOTIDE SEQUENCE [LARGE SCALE GENOMIC DNA]</scope>
    <source>
        <strain>ATCC 35469 / DSM 13698 / BCRC 15582 / CCUG 18766 / IAM 14443 / JCM 21226 / LMG 7866 / NBRC 102419 / NCTC 12128 / CDC 0568-73</strain>
    </source>
</reference>
<name>THII_ESCF3</name>
<keyword id="KW-0067">ATP-binding</keyword>
<keyword id="KW-0963">Cytoplasm</keyword>
<keyword id="KW-1015">Disulfide bond</keyword>
<keyword id="KW-0547">Nucleotide-binding</keyword>
<keyword id="KW-0676">Redox-active center</keyword>
<keyword id="KW-0694">RNA-binding</keyword>
<keyword id="KW-0784">Thiamine biosynthesis</keyword>
<keyword id="KW-0808">Transferase</keyword>
<keyword id="KW-0820">tRNA-binding</keyword>
<accession>B7LMG4</accession>
<feature type="chain" id="PRO_1000116405" description="tRNA sulfurtransferase">
    <location>
        <begin position="1"/>
        <end position="482"/>
    </location>
</feature>
<feature type="domain" description="THUMP" evidence="1">
    <location>
        <begin position="61"/>
        <end position="165"/>
    </location>
</feature>
<feature type="domain" description="Rhodanese" evidence="1">
    <location>
        <begin position="404"/>
        <end position="482"/>
    </location>
</feature>
<feature type="active site" description="Cysteine persulfide intermediate" evidence="1">
    <location>
        <position position="456"/>
    </location>
</feature>
<feature type="binding site" evidence="1">
    <location>
        <begin position="183"/>
        <end position="184"/>
    </location>
    <ligand>
        <name>ATP</name>
        <dbReference type="ChEBI" id="CHEBI:30616"/>
    </ligand>
</feature>
<feature type="binding site" evidence="1">
    <location>
        <position position="265"/>
    </location>
    <ligand>
        <name>ATP</name>
        <dbReference type="ChEBI" id="CHEBI:30616"/>
    </ligand>
</feature>
<feature type="binding site" evidence="1">
    <location>
        <position position="287"/>
    </location>
    <ligand>
        <name>ATP</name>
        <dbReference type="ChEBI" id="CHEBI:30616"/>
    </ligand>
</feature>
<feature type="binding site" evidence="1">
    <location>
        <position position="296"/>
    </location>
    <ligand>
        <name>ATP</name>
        <dbReference type="ChEBI" id="CHEBI:30616"/>
    </ligand>
</feature>
<feature type="disulfide bond" description="Redox-active" evidence="1">
    <location>
        <begin position="344"/>
        <end position="456"/>
    </location>
</feature>